<evidence type="ECO:0000250" key="1"/>
<evidence type="ECO:0000250" key="2">
    <source>
        <dbReference type="UniProtKB" id="P00157"/>
    </source>
</evidence>
<evidence type="ECO:0000255" key="3">
    <source>
        <dbReference type="PROSITE-ProRule" id="PRU00967"/>
    </source>
</evidence>
<evidence type="ECO:0000255" key="4">
    <source>
        <dbReference type="PROSITE-ProRule" id="PRU00968"/>
    </source>
</evidence>
<accession>Q35485</accession>
<name>CYB_PLAIN</name>
<reference key="1">
    <citation type="journal article" date="1997" name="Mol. Phylogenet. Evol.">
        <title>A multigene assessment of phylogenetic relationships within the dasyurid marsupial subfamily Sminthopsinae.</title>
        <authorList>
            <person name="Krajewski C."/>
            <person name="Blacket M."/>
            <person name="Buckley L."/>
            <person name="Westerman M."/>
        </authorList>
    </citation>
    <scope>NUCLEOTIDE SEQUENCE [GENOMIC DNA]</scope>
</reference>
<feature type="chain" id="PRO_0000061413" description="Cytochrome b">
    <location>
        <begin position="1"/>
        <end position="381"/>
    </location>
</feature>
<feature type="transmembrane region" description="Helical" evidence="2">
    <location>
        <begin position="33"/>
        <end position="53"/>
    </location>
</feature>
<feature type="transmembrane region" description="Helical" evidence="2">
    <location>
        <begin position="77"/>
        <end position="98"/>
    </location>
</feature>
<feature type="transmembrane region" description="Helical" evidence="2">
    <location>
        <begin position="113"/>
        <end position="133"/>
    </location>
</feature>
<feature type="transmembrane region" description="Helical" evidence="2">
    <location>
        <begin position="178"/>
        <end position="198"/>
    </location>
</feature>
<feature type="transmembrane region" description="Helical" evidence="2">
    <location>
        <begin position="226"/>
        <end position="246"/>
    </location>
</feature>
<feature type="transmembrane region" description="Helical" evidence="2">
    <location>
        <begin position="288"/>
        <end position="308"/>
    </location>
</feature>
<feature type="transmembrane region" description="Helical" evidence="2">
    <location>
        <begin position="320"/>
        <end position="340"/>
    </location>
</feature>
<feature type="transmembrane region" description="Helical" evidence="2">
    <location>
        <begin position="347"/>
        <end position="367"/>
    </location>
</feature>
<feature type="binding site" description="axial binding residue" evidence="2">
    <location>
        <position position="83"/>
    </location>
    <ligand>
        <name>heme b</name>
        <dbReference type="ChEBI" id="CHEBI:60344"/>
        <label>b562</label>
    </ligand>
    <ligandPart>
        <name>Fe</name>
        <dbReference type="ChEBI" id="CHEBI:18248"/>
    </ligandPart>
</feature>
<feature type="binding site" description="axial binding residue" evidence="2">
    <location>
        <position position="97"/>
    </location>
    <ligand>
        <name>heme b</name>
        <dbReference type="ChEBI" id="CHEBI:60344"/>
        <label>b566</label>
    </ligand>
    <ligandPart>
        <name>Fe</name>
        <dbReference type="ChEBI" id="CHEBI:18248"/>
    </ligandPart>
</feature>
<feature type="binding site" description="axial binding residue" evidence="2">
    <location>
        <position position="182"/>
    </location>
    <ligand>
        <name>heme b</name>
        <dbReference type="ChEBI" id="CHEBI:60344"/>
        <label>b562</label>
    </ligand>
    <ligandPart>
        <name>Fe</name>
        <dbReference type="ChEBI" id="CHEBI:18248"/>
    </ligandPart>
</feature>
<feature type="binding site" description="axial binding residue" evidence="2">
    <location>
        <position position="196"/>
    </location>
    <ligand>
        <name>heme b</name>
        <dbReference type="ChEBI" id="CHEBI:60344"/>
        <label>b566</label>
    </ligand>
    <ligandPart>
        <name>Fe</name>
        <dbReference type="ChEBI" id="CHEBI:18248"/>
    </ligandPart>
</feature>
<feature type="binding site" evidence="2">
    <location>
        <position position="201"/>
    </location>
    <ligand>
        <name>a ubiquinone</name>
        <dbReference type="ChEBI" id="CHEBI:16389"/>
    </ligand>
</feature>
<dbReference type="EMBL" id="U10319">
    <property type="protein sequence ID" value="AAB91486.1"/>
    <property type="molecule type" value="Genomic_DNA"/>
</dbReference>
<dbReference type="SMR" id="Q35485"/>
<dbReference type="GO" id="GO:0005743">
    <property type="term" value="C:mitochondrial inner membrane"/>
    <property type="evidence" value="ECO:0007669"/>
    <property type="project" value="UniProtKB-SubCell"/>
</dbReference>
<dbReference type="GO" id="GO:0045275">
    <property type="term" value="C:respiratory chain complex III"/>
    <property type="evidence" value="ECO:0007669"/>
    <property type="project" value="InterPro"/>
</dbReference>
<dbReference type="GO" id="GO:0046872">
    <property type="term" value="F:metal ion binding"/>
    <property type="evidence" value="ECO:0007669"/>
    <property type="project" value="UniProtKB-KW"/>
</dbReference>
<dbReference type="GO" id="GO:0008121">
    <property type="term" value="F:ubiquinol-cytochrome-c reductase activity"/>
    <property type="evidence" value="ECO:0007669"/>
    <property type="project" value="InterPro"/>
</dbReference>
<dbReference type="GO" id="GO:0006122">
    <property type="term" value="P:mitochondrial electron transport, ubiquinol to cytochrome c"/>
    <property type="evidence" value="ECO:0007669"/>
    <property type="project" value="TreeGrafter"/>
</dbReference>
<dbReference type="CDD" id="cd00290">
    <property type="entry name" value="cytochrome_b_C"/>
    <property type="match status" value="1"/>
</dbReference>
<dbReference type="CDD" id="cd00284">
    <property type="entry name" value="Cytochrome_b_N"/>
    <property type="match status" value="1"/>
</dbReference>
<dbReference type="FunFam" id="1.20.810.10:FF:000002">
    <property type="entry name" value="Cytochrome b"/>
    <property type="match status" value="1"/>
</dbReference>
<dbReference type="Gene3D" id="1.20.810.10">
    <property type="entry name" value="Cytochrome Bc1 Complex, Chain C"/>
    <property type="match status" value="1"/>
</dbReference>
<dbReference type="InterPro" id="IPR005798">
    <property type="entry name" value="Cyt_b/b6_C"/>
</dbReference>
<dbReference type="InterPro" id="IPR036150">
    <property type="entry name" value="Cyt_b/b6_C_sf"/>
</dbReference>
<dbReference type="InterPro" id="IPR005797">
    <property type="entry name" value="Cyt_b/b6_N"/>
</dbReference>
<dbReference type="InterPro" id="IPR027387">
    <property type="entry name" value="Cytb/b6-like_sf"/>
</dbReference>
<dbReference type="InterPro" id="IPR030689">
    <property type="entry name" value="Cytochrome_b"/>
</dbReference>
<dbReference type="InterPro" id="IPR048260">
    <property type="entry name" value="Cytochrome_b_C_euk/bac"/>
</dbReference>
<dbReference type="InterPro" id="IPR048259">
    <property type="entry name" value="Cytochrome_b_N_euk/bac"/>
</dbReference>
<dbReference type="InterPro" id="IPR016174">
    <property type="entry name" value="Di-haem_cyt_TM"/>
</dbReference>
<dbReference type="PANTHER" id="PTHR19271">
    <property type="entry name" value="CYTOCHROME B"/>
    <property type="match status" value="1"/>
</dbReference>
<dbReference type="PANTHER" id="PTHR19271:SF16">
    <property type="entry name" value="CYTOCHROME B"/>
    <property type="match status" value="1"/>
</dbReference>
<dbReference type="Pfam" id="PF00032">
    <property type="entry name" value="Cytochrom_B_C"/>
    <property type="match status" value="1"/>
</dbReference>
<dbReference type="Pfam" id="PF00033">
    <property type="entry name" value="Cytochrome_B"/>
    <property type="match status" value="1"/>
</dbReference>
<dbReference type="PIRSF" id="PIRSF038885">
    <property type="entry name" value="COB"/>
    <property type="match status" value="1"/>
</dbReference>
<dbReference type="SUPFAM" id="SSF81648">
    <property type="entry name" value="a domain/subunit of cytochrome bc1 complex (Ubiquinol-cytochrome c reductase)"/>
    <property type="match status" value="1"/>
</dbReference>
<dbReference type="SUPFAM" id="SSF81342">
    <property type="entry name" value="Transmembrane di-heme cytochromes"/>
    <property type="match status" value="1"/>
</dbReference>
<dbReference type="PROSITE" id="PS51003">
    <property type="entry name" value="CYTB_CTER"/>
    <property type="match status" value="1"/>
</dbReference>
<dbReference type="PROSITE" id="PS51002">
    <property type="entry name" value="CYTB_NTER"/>
    <property type="match status" value="1"/>
</dbReference>
<proteinExistence type="inferred from homology"/>
<keyword id="KW-0249">Electron transport</keyword>
<keyword id="KW-0349">Heme</keyword>
<keyword id="KW-0408">Iron</keyword>
<keyword id="KW-0472">Membrane</keyword>
<keyword id="KW-0479">Metal-binding</keyword>
<keyword id="KW-0496">Mitochondrion</keyword>
<keyword id="KW-0999">Mitochondrion inner membrane</keyword>
<keyword id="KW-0679">Respiratory chain</keyword>
<keyword id="KW-0812">Transmembrane</keyword>
<keyword id="KW-1133">Transmembrane helix</keyword>
<keyword id="KW-0813">Transport</keyword>
<keyword id="KW-0830">Ubiquinone</keyword>
<comment type="function">
    <text evidence="2">Component of the ubiquinol-cytochrome c reductase complex (complex III or cytochrome b-c1 complex) that is part of the mitochondrial respiratory chain. The b-c1 complex mediates electron transfer from ubiquinol to cytochrome c. Contributes to the generation of a proton gradient across the mitochondrial membrane that is then used for ATP synthesis.</text>
</comment>
<comment type="cofactor">
    <cofactor evidence="2">
        <name>heme b</name>
        <dbReference type="ChEBI" id="CHEBI:60344"/>
    </cofactor>
    <text evidence="2">Binds 2 heme b groups non-covalently.</text>
</comment>
<comment type="subunit">
    <text evidence="2">The cytochrome bc1 complex contains 11 subunits: 3 respiratory subunits (MT-CYB, CYC1 and UQCRFS1), 2 core proteins (UQCRC1 and UQCRC2) and 6 low-molecular weight proteins (UQCRH/QCR6, UQCRB/QCR7, UQCRQ/QCR8, UQCR10/QCR9, UQCR11/QCR10 and a cleavage product of UQCRFS1). This cytochrome bc1 complex then forms a dimer.</text>
</comment>
<comment type="subcellular location">
    <subcellularLocation>
        <location evidence="2">Mitochondrion inner membrane</location>
        <topology evidence="2">Multi-pass membrane protein</topology>
    </subcellularLocation>
</comment>
<comment type="miscellaneous">
    <text evidence="1">Heme 1 (or BL or b562) is low-potential and absorbs at about 562 nm, and heme 2 (or BH or b566) is high-potential and absorbs at about 566 nm.</text>
</comment>
<comment type="similarity">
    <text evidence="3 4">Belongs to the cytochrome b family.</text>
</comment>
<comment type="caution">
    <text evidence="2">The full-length protein contains only eight transmembrane helices, not nine as predicted by bioinformatics tools.</text>
</comment>
<sequence length="381" mass="42808">MTNLRKTHPLMKIINNSFIDLPAPSNISAWWNFGSLLGICLVIQILTGLFLAMHYTSDTLTAFSSVAHICRDVKFGWLIRNLHANGASFFFMCIYIHIGRGFYYGSYLNKETWNIGVVLLLTLMATAFVGYVLPWGQMSFWGATVITNLLSAIPYIGTTLAEWIWGGFAVDKATLTRFFAFHFILPFIITALVIVHLLFLHETGSNNPSGVNPDSDKIPFHPYYTIKDALGLLFLLLTLLMLALFSPDSLGDPDNFSPANPLNTPPHIKPEWYFLFAYAILRSIPNKLGGVLALLASILILLIIPLLHTANQRSMMFRPVSQTLFWILAANLITLTWIGGQPVEQPFIIIGQLASILYFMLILVLMPMAGLFENYMLKPKW</sequence>
<gene>
    <name type="primary">MT-CYB</name>
    <name type="synonym">COB</name>
    <name type="synonym">CYTB</name>
    <name type="synonym">MTCYB</name>
</gene>
<geneLocation type="mitochondrion"/>
<organism>
    <name type="scientific">Planigale ingrami</name>
    <name type="common">Long-tailed planigale</name>
    <dbReference type="NCBI Taxonomy" id="34895"/>
    <lineage>
        <taxon>Eukaryota</taxon>
        <taxon>Metazoa</taxon>
        <taxon>Chordata</taxon>
        <taxon>Craniata</taxon>
        <taxon>Vertebrata</taxon>
        <taxon>Euteleostomi</taxon>
        <taxon>Mammalia</taxon>
        <taxon>Metatheria</taxon>
        <taxon>Dasyuromorphia</taxon>
        <taxon>Dasyuridae</taxon>
        <taxon>Planigale</taxon>
    </lineage>
</organism>
<protein>
    <recommendedName>
        <fullName>Cytochrome b</fullName>
    </recommendedName>
    <alternativeName>
        <fullName>Complex III subunit 3</fullName>
    </alternativeName>
    <alternativeName>
        <fullName>Complex III subunit III</fullName>
    </alternativeName>
    <alternativeName>
        <fullName>Cytochrome b-c1 complex subunit 3</fullName>
    </alternativeName>
    <alternativeName>
        <fullName>Ubiquinol-cytochrome-c reductase complex cytochrome b subunit</fullName>
    </alternativeName>
</protein>